<geneLocation type="plasmid">
    <name>Invasion</name>
</geneLocation>
<sequence length="208" mass="23686">MQILNKILPQVEFAIPRPSFNSLSRNKLVKKILSVFNLKQRFPQKNFGCTVNINKIRDNVIDKIKDSNSGNQLFCWMSQERTTYVSSMINRSIDEMAIHNGVVLTSDNKKNIFAAIEKKFPDIKLDEKSAQTSISHTALNEIASSGLRAKILKRYSSDMDLFNTQMKDLTNLVSSSVYDKIFNESTKVLQIEISAEVLKAVYRQSNTN</sequence>
<feature type="chain" id="PRO_0000084221" description="Protein IpgB">
    <location>
        <begin position="1"/>
        <end position="208"/>
    </location>
</feature>
<gene>
    <name type="primary">ipgB</name>
</gene>
<proteinExistence type="predicted"/>
<reference key="1">
    <citation type="journal article" date="1991" name="Mol. Microbiol.">
        <title>Nucleotide sequence of the ipaBCD structural genes of Shigella dysenteriae.</title>
        <authorList>
            <person name="Yao R."/>
            <person name="Palchaudhuri S."/>
        </authorList>
    </citation>
    <scope>NUCLEOTIDE SEQUENCE [GENOMIC DNA]</scope>
    <source>
        <strain>CG097</strain>
    </source>
</reference>
<protein>
    <recommendedName>
        <fullName>Protein IpgB</fullName>
    </recommendedName>
</protein>
<name>IPGB_SHIDY</name>
<keyword id="KW-0614">Plasmid</keyword>
<keyword id="KW-0843">Virulence</keyword>
<accession>Q04314</accession>
<organism>
    <name type="scientific">Shigella dysenteriae</name>
    <dbReference type="NCBI Taxonomy" id="622"/>
    <lineage>
        <taxon>Bacteria</taxon>
        <taxon>Pseudomonadati</taxon>
        <taxon>Pseudomonadota</taxon>
        <taxon>Gammaproteobacteria</taxon>
        <taxon>Enterobacterales</taxon>
        <taxon>Enterobacteriaceae</taxon>
        <taxon>Shigella</taxon>
    </lineage>
</organism>
<dbReference type="EMBL" id="X60777">
    <property type="protein sequence ID" value="CAA43188.1"/>
    <property type="molecule type" value="Genomic_DNA"/>
</dbReference>
<dbReference type="PIR" id="S15575">
    <property type="entry name" value="S15575"/>
</dbReference>
<dbReference type="SMR" id="Q04314"/>
<dbReference type="Gene3D" id="1.10.4120.20">
    <property type="match status" value="1"/>
</dbReference>
<dbReference type="InterPro" id="IPR004959">
    <property type="entry name" value="Bac_effector_IpgB-like"/>
</dbReference>
<dbReference type="Pfam" id="PF03278">
    <property type="entry name" value="IpaB_EvcA"/>
    <property type="match status" value="1"/>
</dbReference>